<gene>
    <name evidence="1" type="primary">rnhB</name>
    <name type="ordered locus">Amet_2740</name>
</gene>
<accession>A6TRS3</accession>
<sequence>MNRLEIENQLWEEGYESIAGCDEVGRGCLFGSVLAATVILPKGLLIEGVKDSKKLSPKRREELYEVIKKNAIAMGVGIISAEVIDQINIRQASRLAMKKSVLSLTTIDGESKIPDYILVDAENIDIAIPQSAIIKGDDRSQGIAAASIVAKVIRDRLCIRWDEEYPNYGIAQHKGYGTKLHREALLKYGPSELHRRSFLKKILK</sequence>
<proteinExistence type="inferred from homology"/>
<reference key="1">
    <citation type="journal article" date="2016" name="Genome Announc.">
        <title>Complete genome sequence of Alkaliphilus metalliredigens strain QYMF, an alkaliphilic and metal-reducing bacterium isolated from borax-contaminated leachate ponds.</title>
        <authorList>
            <person name="Hwang C."/>
            <person name="Copeland A."/>
            <person name="Lucas S."/>
            <person name="Lapidus A."/>
            <person name="Barry K."/>
            <person name="Detter J.C."/>
            <person name="Glavina Del Rio T."/>
            <person name="Hammon N."/>
            <person name="Israni S."/>
            <person name="Dalin E."/>
            <person name="Tice H."/>
            <person name="Pitluck S."/>
            <person name="Chertkov O."/>
            <person name="Brettin T."/>
            <person name="Bruce D."/>
            <person name="Han C."/>
            <person name="Schmutz J."/>
            <person name="Larimer F."/>
            <person name="Land M.L."/>
            <person name="Hauser L."/>
            <person name="Kyrpides N."/>
            <person name="Mikhailova N."/>
            <person name="Ye Q."/>
            <person name="Zhou J."/>
            <person name="Richardson P."/>
            <person name="Fields M.W."/>
        </authorList>
    </citation>
    <scope>NUCLEOTIDE SEQUENCE [LARGE SCALE GENOMIC DNA]</scope>
    <source>
        <strain>QYMF</strain>
    </source>
</reference>
<protein>
    <recommendedName>
        <fullName evidence="1">Ribonuclease HII</fullName>
        <shortName evidence="1">RNase HII</shortName>
        <ecNumber evidence="1">3.1.26.4</ecNumber>
    </recommendedName>
</protein>
<evidence type="ECO:0000255" key="1">
    <source>
        <dbReference type="HAMAP-Rule" id="MF_00052"/>
    </source>
</evidence>
<evidence type="ECO:0000255" key="2">
    <source>
        <dbReference type="PROSITE-ProRule" id="PRU01319"/>
    </source>
</evidence>
<keyword id="KW-0963">Cytoplasm</keyword>
<keyword id="KW-0255">Endonuclease</keyword>
<keyword id="KW-0378">Hydrolase</keyword>
<keyword id="KW-0464">Manganese</keyword>
<keyword id="KW-0479">Metal-binding</keyword>
<keyword id="KW-0540">Nuclease</keyword>
<keyword id="KW-1185">Reference proteome</keyword>
<organism>
    <name type="scientific">Alkaliphilus metalliredigens (strain QYMF)</name>
    <dbReference type="NCBI Taxonomy" id="293826"/>
    <lineage>
        <taxon>Bacteria</taxon>
        <taxon>Bacillati</taxon>
        <taxon>Bacillota</taxon>
        <taxon>Clostridia</taxon>
        <taxon>Peptostreptococcales</taxon>
        <taxon>Natronincolaceae</taxon>
        <taxon>Alkaliphilus</taxon>
    </lineage>
</organism>
<comment type="function">
    <text evidence="1">Endonuclease that specifically degrades the RNA of RNA-DNA hybrids.</text>
</comment>
<comment type="catalytic activity">
    <reaction evidence="1">
        <text>Endonucleolytic cleavage to 5'-phosphomonoester.</text>
        <dbReference type="EC" id="3.1.26.4"/>
    </reaction>
</comment>
<comment type="cofactor">
    <cofactor evidence="1">
        <name>Mn(2+)</name>
        <dbReference type="ChEBI" id="CHEBI:29035"/>
    </cofactor>
    <cofactor evidence="1">
        <name>Mg(2+)</name>
        <dbReference type="ChEBI" id="CHEBI:18420"/>
    </cofactor>
    <text evidence="1">Manganese or magnesium. Binds 1 divalent metal ion per monomer in the absence of substrate. May bind a second metal ion after substrate binding.</text>
</comment>
<comment type="subcellular location">
    <subcellularLocation>
        <location evidence="1">Cytoplasm</location>
    </subcellularLocation>
</comment>
<comment type="similarity">
    <text evidence="1">Belongs to the RNase HII family.</text>
</comment>
<dbReference type="EC" id="3.1.26.4" evidence="1"/>
<dbReference type="EMBL" id="CP000724">
    <property type="protein sequence ID" value="ABR48891.1"/>
    <property type="molecule type" value="Genomic_DNA"/>
</dbReference>
<dbReference type="RefSeq" id="WP_012063863.1">
    <property type="nucleotide sequence ID" value="NC_009633.1"/>
</dbReference>
<dbReference type="SMR" id="A6TRS3"/>
<dbReference type="STRING" id="293826.Amet_2740"/>
<dbReference type="KEGG" id="amt:Amet_2740"/>
<dbReference type="eggNOG" id="COG0164">
    <property type="taxonomic scope" value="Bacteria"/>
</dbReference>
<dbReference type="HOGENOM" id="CLU_036532_3_2_9"/>
<dbReference type="OrthoDB" id="9803420at2"/>
<dbReference type="Proteomes" id="UP000001572">
    <property type="component" value="Chromosome"/>
</dbReference>
<dbReference type="GO" id="GO:0005737">
    <property type="term" value="C:cytoplasm"/>
    <property type="evidence" value="ECO:0007669"/>
    <property type="project" value="UniProtKB-SubCell"/>
</dbReference>
<dbReference type="GO" id="GO:0032299">
    <property type="term" value="C:ribonuclease H2 complex"/>
    <property type="evidence" value="ECO:0007669"/>
    <property type="project" value="TreeGrafter"/>
</dbReference>
<dbReference type="GO" id="GO:0030145">
    <property type="term" value="F:manganese ion binding"/>
    <property type="evidence" value="ECO:0007669"/>
    <property type="project" value="UniProtKB-UniRule"/>
</dbReference>
<dbReference type="GO" id="GO:0003723">
    <property type="term" value="F:RNA binding"/>
    <property type="evidence" value="ECO:0007669"/>
    <property type="project" value="InterPro"/>
</dbReference>
<dbReference type="GO" id="GO:0004523">
    <property type="term" value="F:RNA-DNA hybrid ribonuclease activity"/>
    <property type="evidence" value="ECO:0007669"/>
    <property type="project" value="UniProtKB-UniRule"/>
</dbReference>
<dbReference type="GO" id="GO:0043137">
    <property type="term" value="P:DNA replication, removal of RNA primer"/>
    <property type="evidence" value="ECO:0007669"/>
    <property type="project" value="TreeGrafter"/>
</dbReference>
<dbReference type="GO" id="GO:0006298">
    <property type="term" value="P:mismatch repair"/>
    <property type="evidence" value="ECO:0007669"/>
    <property type="project" value="TreeGrafter"/>
</dbReference>
<dbReference type="CDD" id="cd07182">
    <property type="entry name" value="RNase_HII_bacteria_HII_like"/>
    <property type="match status" value="1"/>
</dbReference>
<dbReference type="Gene3D" id="3.30.420.10">
    <property type="entry name" value="Ribonuclease H-like superfamily/Ribonuclease H"/>
    <property type="match status" value="1"/>
</dbReference>
<dbReference type="HAMAP" id="MF_00052_B">
    <property type="entry name" value="RNase_HII_B"/>
    <property type="match status" value="1"/>
</dbReference>
<dbReference type="InterPro" id="IPR022898">
    <property type="entry name" value="RNase_HII"/>
</dbReference>
<dbReference type="InterPro" id="IPR001352">
    <property type="entry name" value="RNase_HII/HIII"/>
</dbReference>
<dbReference type="InterPro" id="IPR024567">
    <property type="entry name" value="RNase_HII/HIII_dom"/>
</dbReference>
<dbReference type="InterPro" id="IPR012337">
    <property type="entry name" value="RNaseH-like_sf"/>
</dbReference>
<dbReference type="InterPro" id="IPR036397">
    <property type="entry name" value="RNaseH_sf"/>
</dbReference>
<dbReference type="NCBIfam" id="NF000594">
    <property type="entry name" value="PRK00015.1-1"/>
    <property type="match status" value="1"/>
</dbReference>
<dbReference type="NCBIfam" id="NF000595">
    <property type="entry name" value="PRK00015.1-3"/>
    <property type="match status" value="1"/>
</dbReference>
<dbReference type="PANTHER" id="PTHR10954">
    <property type="entry name" value="RIBONUCLEASE H2 SUBUNIT A"/>
    <property type="match status" value="1"/>
</dbReference>
<dbReference type="PANTHER" id="PTHR10954:SF18">
    <property type="entry name" value="RIBONUCLEASE HII"/>
    <property type="match status" value="1"/>
</dbReference>
<dbReference type="Pfam" id="PF01351">
    <property type="entry name" value="RNase_HII"/>
    <property type="match status" value="1"/>
</dbReference>
<dbReference type="SUPFAM" id="SSF53098">
    <property type="entry name" value="Ribonuclease H-like"/>
    <property type="match status" value="1"/>
</dbReference>
<dbReference type="PROSITE" id="PS51975">
    <property type="entry name" value="RNASE_H_2"/>
    <property type="match status" value="1"/>
</dbReference>
<feature type="chain" id="PRO_0000334858" description="Ribonuclease HII">
    <location>
        <begin position="1"/>
        <end position="204"/>
    </location>
</feature>
<feature type="domain" description="RNase H type-2" evidence="2">
    <location>
        <begin position="16"/>
        <end position="204"/>
    </location>
</feature>
<feature type="binding site" evidence="1">
    <location>
        <position position="22"/>
    </location>
    <ligand>
        <name>a divalent metal cation</name>
        <dbReference type="ChEBI" id="CHEBI:60240"/>
    </ligand>
</feature>
<feature type="binding site" evidence="1">
    <location>
        <position position="23"/>
    </location>
    <ligand>
        <name>a divalent metal cation</name>
        <dbReference type="ChEBI" id="CHEBI:60240"/>
    </ligand>
</feature>
<feature type="binding site" evidence="1">
    <location>
        <position position="120"/>
    </location>
    <ligand>
        <name>a divalent metal cation</name>
        <dbReference type="ChEBI" id="CHEBI:60240"/>
    </ligand>
</feature>
<name>RNH2_ALKMQ</name>